<reference key="1">
    <citation type="journal article" date="2005" name="BMC Genomics">
        <title>Bacterial genome adaptation to niches: divergence of the potential virulence genes in three Burkholderia species of different survival strategies.</title>
        <authorList>
            <person name="Kim H.S."/>
            <person name="Schell M.A."/>
            <person name="Yu Y."/>
            <person name="Ulrich R.L."/>
            <person name="Sarria S.H."/>
            <person name="Nierman W.C."/>
            <person name="DeShazer D."/>
        </authorList>
    </citation>
    <scope>NUCLEOTIDE SEQUENCE [LARGE SCALE GENOMIC DNA]</scope>
    <source>
        <strain>ATCC 700388 / DSM 13276 / CCUG 48851 / CIP 106301 / E264</strain>
    </source>
</reference>
<accession>Q2SZE1</accession>
<name>PRMA_BURTA</name>
<protein>
    <recommendedName>
        <fullName evidence="1">Ribosomal protein L11 methyltransferase</fullName>
        <shortName evidence="1">L11 Mtase</shortName>
        <ecNumber evidence="1">2.1.1.-</ecNumber>
    </recommendedName>
</protein>
<sequence length="300" mass="32475">MSYRELVAELPREHAEALSDALVELGALSVSVEDADADTPDEQPLFGEPGLVPERTAWQHSRVIALVDAAQDPAVLLAAAANEAGLAETPRFELREVEEQDWVRLTQSQFDPIHIGEKIWVVPSWHDAPEPDALVLELDPGLAFGTGSHPTTRLCMEWLEQTVQPGQTVLDYGCGSGILAILAKKCGAGNVTGIDIDPQAVEAARQNSERNRADVTYGLPDDCPAGEFDIVVANILSNPLKLMASMLTSKVKPGGRIALSGVLARQADEVASVYARYVDIAVWREHEGWVCLAGTRRESH</sequence>
<proteinExistence type="inferred from homology"/>
<feature type="chain" id="PRO_1000045999" description="Ribosomal protein L11 methyltransferase">
    <location>
        <begin position="1"/>
        <end position="300"/>
    </location>
</feature>
<feature type="binding site" evidence="1">
    <location>
        <position position="152"/>
    </location>
    <ligand>
        <name>S-adenosyl-L-methionine</name>
        <dbReference type="ChEBI" id="CHEBI:59789"/>
    </ligand>
</feature>
<feature type="binding site" evidence="1">
    <location>
        <position position="173"/>
    </location>
    <ligand>
        <name>S-adenosyl-L-methionine</name>
        <dbReference type="ChEBI" id="CHEBI:59789"/>
    </ligand>
</feature>
<feature type="binding site" evidence="1">
    <location>
        <position position="195"/>
    </location>
    <ligand>
        <name>S-adenosyl-L-methionine</name>
        <dbReference type="ChEBI" id="CHEBI:59789"/>
    </ligand>
</feature>
<feature type="binding site" evidence="1">
    <location>
        <position position="234"/>
    </location>
    <ligand>
        <name>S-adenosyl-L-methionine</name>
        <dbReference type="ChEBI" id="CHEBI:59789"/>
    </ligand>
</feature>
<dbReference type="EC" id="2.1.1.-" evidence="1"/>
<dbReference type="EMBL" id="CP000086">
    <property type="protein sequence ID" value="ABC37191.1"/>
    <property type="molecule type" value="Genomic_DNA"/>
</dbReference>
<dbReference type="RefSeq" id="WP_009903922.1">
    <property type="nucleotide sequence ID" value="NZ_CP008785.1"/>
</dbReference>
<dbReference type="SMR" id="Q2SZE1"/>
<dbReference type="GeneID" id="45120912"/>
<dbReference type="KEGG" id="bte:BTH_I1161"/>
<dbReference type="HOGENOM" id="CLU_049382_4_1_4"/>
<dbReference type="Proteomes" id="UP000001930">
    <property type="component" value="Chromosome I"/>
</dbReference>
<dbReference type="GO" id="GO:0005829">
    <property type="term" value="C:cytosol"/>
    <property type="evidence" value="ECO:0007669"/>
    <property type="project" value="TreeGrafter"/>
</dbReference>
<dbReference type="GO" id="GO:0016279">
    <property type="term" value="F:protein-lysine N-methyltransferase activity"/>
    <property type="evidence" value="ECO:0007669"/>
    <property type="project" value="TreeGrafter"/>
</dbReference>
<dbReference type="GO" id="GO:0032259">
    <property type="term" value="P:methylation"/>
    <property type="evidence" value="ECO:0007669"/>
    <property type="project" value="UniProtKB-KW"/>
</dbReference>
<dbReference type="CDD" id="cd02440">
    <property type="entry name" value="AdoMet_MTases"/>
    <property type="match status" value="1"/>
</dbReference>
<dbReference type="Gene3D" id="3.40.50.150">
    <property type="entry name" value="Vaccinia Virus protein VP39"/>
    <property type="match status" value="1"/>
</dbReference>
<dbReference type="HAMAP" id="MF_00735">
    <property type="entry name" value="Methyltr_PrmA"/>
    <property type="match status" value="1"/>
</dbReference>
<dbReference type="InterPro" id="IPR050078">
    <property type="entry name" value="Ribosomal_L11_MeTrfase_PrmA"/>
</dbReference>
<dbReference type="InterPro" id="IPR004498">
    <property type="entry name" value="Ribosomal_PrmA_MeTrfase"/>
</dbReference>
<dbReference type="InterPro" id="IPR029063">
    <property type="entry name" value="SAM-dependent_MTases_sf"/>
</dbReference>
<dbReference type="NCBIfam" id="TIGR00406">
    <property type="entry name" value="prmA"/>
    <property type="match status" value="1"/>
</dbReference>
<dbReference type="PANTHER" id="PTHR43648">
    <property type="entry name" value="ELECTRON TRANSFER FLAVOPROTEIN BETA SUBUNIT LYSINE METHYLTRANSFERASE"/>
    <property type="match status" value="1"/>
</dbReference>
<dbReference type="PANTHER" id="PTHR43648:SF1">
    <property type="entry name" value="ELECTRON TRANSFER FLAVOPROTEIN BETA SUBUNIT LYSINE METHYLTRANSFERASE"/>
    <property type="match status" value="1"/>
</dbReference>
<dbReference type="Pfam" id="PF06325">
    <property type="entry name" value="PrmA"/>
    <property type="match status" value="1"/>
</dbReference>
<dbReference type="PIRSF" id="PIRSF000401">
    <property type="entry name" value="RPL11_MTase"/>
    <property type="match status" value="1"/>
</dbReference>
<dbReference type="SUPFAM" id="SSF53335">
    <property type="entry name" value="S-adenosyl-L-methionine-dependent methyltransferases"/>
    <property type="match status" value="1"/>
</dbReference>
<evidence type="ECO:0000255" key="1">
    <source>
        <dbReference type="HAMAP-Rule" id="MF_00735"/>
    </source>
</evidence>
<comment type="function">
    <text evidence="1">Methylates ribosomal protein L11.</text>
</comment>
<comment type="catalytic activity">
    <reaction evidence="1">
        <text>L-lysyl-[protein] + 3 S-adenosyl-L-methionine = N(6),N(6),N(6)-trimethyl-L-lysyl-[protein] + 3 S-adenosyl-L-homocysteine + 3 H(+)</text>
        <dbReference type="Rhea" id="RHEA:54192"/>
        <dbReference type="Rhea" id="RHEA-COMP:9752"/>
        <dbReference type="Rhea" id="RHEA-COMP:13826"/>
        <dbReference type="ChEBI" id="CHEBI:15378"/>
        <dbReference type="ChEBI" id="CHEBI:29969"/>
        <dbReference type="ChEBI" id="CHEBI:57856"/>
        <dbReference type="ChEBI" id="CHEBI:59789"/>
        <dbReference type="ChEBI" id="CHEBI:61961"/>
    </reaction>
</comment>
<comment type="subcellular location">
    <subcellularLocation>
        <location evidence="1">Cytoplasm</location>
    </subcellularLocation>
</comment>
<comment type="similarity">
    <text evidence="1">Belongs to the methyltransferase superfamily. PrmA family.</text>
</comment>
<gene>
    <name evidence="1" type="primary">prmA</name>
    <name type="ordered locus">BTH_I1161</name>
</gene>
<keyword id="KW-0963">Cytoplasm</keyword>
<keyword id="KW-0489">Methyltransferase</keyword>
<keyword id="KW-0949">S-adenosyl-L-methionine</keyword>
<keyword id="KW-0808">Transferase</keyword>
<organism>
    <name type="scientific">Burkholderia thailandensis (strain ATCC 700388 / DSM 13276 / CCUG 48851 / CIP 106301 / E264)</name>
    <dbReference type="NCBI Taxonomy" id="271848"/>
    <lineage>
        <taxon>Bacteria</taxon>
        <taxon>Pseudomonadati</taxon>
        <taxon>Pseudomonadota</taxon>
        <taxon>Betaproteobacteria</taxon>
        <taxon>Burkholderiales</taxon>
        <taxon>Burkholderiaceae</taxon>
        <taxon>Burkholderia</taxon>
        <taxon>pseudomallei group</taxon>
    </lineage>
</organism>